<comment type="function">
    <text evidence="1">E3 ubiquitin ligase which accepts ubiquitin and transfers it to substrates thereby promoting their degradation by the endoplasmic reticulum-associated degradation (ERAD) pathway which is a pathway involved in ubiquitin-dependent degradation of misfolded endoplasmic reticulum proteins (By similarity). May regulate the unfolded protein response to reduce endoplasmic reticulum stress (By similarity).</text>
</comment>
<comment type="catalytic activity">
    <reaction evidence="1">
        <text>S-ubiquitinyl-[E2 ubiquitin-conjugating enzyme]-L-cysteine + [acceptor protein]-L-lysine = [E2 ubiquitin-conjugating enzyme]-L-cysteine + N(6)-ubiquitinyl-[acceptor protein]-L-lysine.</text>
        <dbReference type="EC" id="2.3.2.27"/>
    </reaction>
</comment>
<comment type="pathway">
    <text evidence="1">Protein modification; protein ubiquitination.</text>
</comment>
<comment type="subcellular location">
    <subcellularLocation>
        <location evidence="1">Endoplasmic reticulum membrane</location>
        <topology evidence="5">Multi-pass membrane protein</topology>
    </subcellularLocation>
</comment>
<comment type="alternative products">
    <event type="alternative splicing"/>
    <isoform>
        <id>Q9H920-1</id>
        <name>1</name>
        <sequence type="displayed"/>
    </isoform>
    <isoform>
        <id>Q9H920-2</id>
        <name>2</name>
        <sequence type="described" ref="VSP_054133"/>
    </isoform>
</comment>
<comment type="similarity">
    <text evidence="5">Belongs to the RNF121 family.</text>
</comment>
<comment type="sequence caution" evidence="5">
    <conflict type="erroneous initiation">
        <sequence resource="EMBL-CDS" id="AAH09672"/>
    </conflict>
</comment>
<comment type="sequence caution" evidence="5">
    <conflict type="erroneous initiation">
        <sequence resource="EMBL-CDS" id="AAH63680"/>
    </conflict>
</comment>
<dbReference type="EC" id="2.3.2.27" evidence="1"/>
<dbReference type="EMBL" id="AK023139">
    <property type="protein sequence ID" value="BAB14423.1"/>
    <property type="molecule type" value="mRNA"/>
</dbReference>
<dbReference type="EMBL" id="AK094508">
    <property type="protein sequence ID" value="BAG52880.1"/>
    <property type="molecule type" value="mRNA"/>
</dbReference>
<dbReference type="EMBL" id="CR457298">
    <property type="protein sequence ID" value="CAG33579.1"/>
    <property type="molecule type" value="mRNA"/>
</dbReference>
<dbReference type="EMBL" id="AP002490">
    <property type="status" value="NOT_ANNOTATED_CDS"/>
    <property type="molecule type" value="Genomic_DNA"/>
</dbReference>
<dbReference type="EMBL" id="CH471076">
    <property type="protein sequence ID" value="EAW74810.1"/>
    <property type="molecule type" value="Genomic_DNA"/>
</dbReference>
<dbReference type="EMBL" id="BC009672">
    <property type="protein sequence ID" value="AAH09672.2"/>
    <property type="status" value="ALT_INIT"/>
    <property type="molecule type" value="mRNA"/>
</dbReference>
<dbReference type="EMBL" id="BC063680">
    <property type="protein sequence ID" value="AAH63680.1"/>
    <property type="status" value="ALT_INIT"/>
    <property type="molecule type" value="mRNA"/>
</dbReference>
<dbReference type="CCDS" id="CCDS8203.1">
    <molecule id="Q9H920-1"/>
</dbReference>
<dbReference type="RefSeq" id="NP_060790.2">
    <molecule id="Q9H920-1"/>
    <property type="nucleotide sequence ID" value="NM_018320.4"/>
</dbReference>
<dbReference type="RefSeq" id="XP_006718693.1">
    <property type="nucleotide sequence ID" value="XM_006718630.1"/>
</dbReference>
<dbReference type="RefSeq" id="XP_011543452.1">
    <property type="nucleotide sequence ID" value="XM_011545150.1"/>
</dbReference>
<dbReference type="RefSeq" id="XP_047283190.1">
    <molecule id="Q9H920-2"/>
    <property type="nucleotide sequence ID" value="XM_047427234.1"/>
</dbReference>
<dbReference type="RefSeq" id="XP_054225266.1">
    <molecule id="Q9H920-2"/>
    <property type="nucleotide sequence ID" value="XM_054369291.1"/>
</dbReference>
<dbReference type="BioGRID" id="120585">
    <property type="interactions" value="17"/>
</dbReference>
<dbReference type="FunCoup" id="Q9H920">
    <property type="interactions" value="1430"/>
</dbReference>
<dbReference type="IntAct" id="Q9H920">
    <property type="interactions" value="6"/>
</dbReference>
<dbReference type="STRING" id="9606.ENSP00000354571"/>
<dbReference type="iPTMnet" id="Q9H920"/>
<dbReference type="PhosphoSitePlus" id="Q9H920"/>
<dbReference type="SwissPalm" id="Q9H920"/>
<dbReference type="BioMuta" id="RNF121"/>
<dbReference type="CPTAC" id="CPTAC-1633"/>
<dbReference type="jPOST" id="Q9H920"/>
<dbReference type="MassIVE" id="Q9H920"/>
<dbReference type="PaxDb" id="9606-ENSP00000354571"/>
<dbReference type="PeptideAtlas" id="Q9H920"/>
<dbReference type="ProteomicsDB" id="3656"/>
<dbReference type="ProteomicsDB" id="81272">
    <molecule id="Q9H920-1"/>
</dbReference>
<dbReference type="Pumba" id="Q9H920"/>
<dbReference type="Antibodypedia" id="16872">
    <property type="antibodies" value="96 antibodies from 19 providers"/>
</dbReference>
<dbReference type="DNASU" id="55298"/>
<dbReference type="Ensembl" id="ENST00000361756.8">
    <molecule id="Q9H920-1"/>
    <property type="protein sequence ID" value="ENSP00000354571.3"/>
    <property type="gene ID" value="ENSG00000137522.18"/>
</dbReference>
<dbReference type="GeneID" id="55298"/>
<dbReference type="KEGG" id="hsa:55298"/>
<dbReference type="MANE-Select" id="ENST00000361756.8">
    <property type="protein sequence ID" value="ENSP00000354571.3"/>
    <property type="RefSeq nucleotide sequence ID" value="NM_018320.5"/>
    <property type="RefSeq protein sequence ID" value="NP_060790.2"/>
</dbReference>
<dbReference type="UCSC" id="uc001ora.4">
    <molecule id="Q9H920-1"/>
    <property type="organism name" value="human"/>
</dbReference>
<dbReference type="AGR" id="HGNC:21070"/>
<dbReference type="CTD" id="55298"/>
<dbReference type="DisGeNET" id="55298"/>
<dbReference type="GeneCards" id="RNF121"/>
<dbReference type="HGNC" id="HGNC:21070">
    <property type="gene designation" value="RNF121"/>
</dbReference>
<dbReference type="HPA" id="ENSG00000137522">
    <property type="expression patterns" value="Low tissue specificity"/>
</dbReference>
<dbReference type="MIM" id="620529">
    <property type="type" value="gene"/>
</dbReference>
<dbReference type="neXtProt" id="NX_Q9H920"/>
<dbReference type="OpenTargets" id="ENSG00000137522"/>
<dbReference type="PharmGKB" id="PA134985388"/>
<dbReference type="VEuPathDB" id="HostDB:ENSG00000137522"/>
<dbReference type="eggNOG" id="KOG1734">
    <property type="taxonomic scope" value="Eukaryota"/>
</dbReference>
<dbReference type="GeneTree" id="ENSGT00390000013075"/>
<dbReference type="InParanoid" id="Q9H920"/>
<dbReference type="OMA" id="ICADKIA"/>
<dbReference type="OrthoDB" id="446635at2759"/>
<dbReference type="PAN-GO" id="Q9H920">
    <property type="GO annotations" value="4 GO annotations based on evolutionary models"/>
</dbReference>
<dbReference type="PhylomeDB" id="Q9H920"/>
<dbReference type="TreeFam" id="TF314357"/>
<dbReference type="PathwayCommons" id="Q9H920"/>
<dbReference type="SignaLink" id="Q9H920"/>
<dbReference type="SIGNOR" id="Q9H920"/>
<dbReference type="UniPathway" id="UPA00143"/>
<dbReference type="BioGRID-ORCS" id="55298">
    <property type="hits" value="32 hits in 1196 CRISPR screens"/>
</dbReference>
<dbReference type="ChiTaRS" id="RNF121">
    <property type="organism name" value="human"/>
</dbReference>
<dbReference type="GenomeRNAi" id="55298"/>
<dbReference type="Pharos" id="Q9H920">
    <property type="development level" value="Tbio"/>
</dbReference>
<dbReference type="PRO" id="PR:Q9H920"/>
<dbReference type="Proteomes" id="UP000005640">
    <property type="component" value="Chromosome 11"/>
</dbReference>
<dbReference type="RNAct" id="Q9H920">
    <property type="molecule type" value="protein"/>
</dbReference>
<dbReference type="Bgee" id="ENSG00000137522">
    <property type="expression patterns" value="Expressed in quadriceps femoris and 107 other cell types or tissues"/>
</dbReference>
<dbReference type="ExpressionAtlas" id="Q9H920">
    <property type="expression patterns" value="baseline and differential"/>
</dbReference>
<dbReference type="GO" id="GO:0005789">
    <property type="term" value="C:endoplasmic reticulum membrane"/>
    <property type="evidence" value="ECO:0000318"/>
    <property type="project" value="GO_Central"/>
</dbReference>
<dbReference type="GO" id="GO:0000139">
    <property type="term" value="C:Golgi membrane"/>
    <property type="evidence" value="ECO:0000318"/>
    <property type="project" value="GO_Central"/>
</dbReference>
<dbReference type="GO" id="GO:0061630">
    <property type="term" value="F:ubiquitin protein ligase activity"/>
    <property type="evidence" value="ECO:0000318"/>
    <property type="project" value="GO_Central"/>
</dbReference>
<dbReference type="GO" id="GO:0008270">
    <property type="term" value="F:zinc ion binding"/>
    <property type="evidence" value="ECO:0007669"/>
    <property type="project" value="UniProtKB-KW"/>
</dbReference>
<dbReference type="GO" id="GO:0036503">
    <property type="term" value="P:ERAD pathway"/>
    <property type="evidence" value="ECO:0000318"/>
    <property type="project" value="GO_Central"/>
</dbReference>
<dbReference type="GO" id="GO:0016567">
    <property type="term" value="P:protein ubiquitination"/>
    <property type="evidence" value="ECO:0007669"/>
    <property type="project" value="UniProtKB-UniPathway"/>
</dbReference>
<dbReference type="CDD" id="cd16475">
    <property type="entry name" value="RING-H2_RNF121-like"/>
    <property type="match status" value="1"/>
</dbReference>
<dbReference type="FunFam" id="3.30.40.10:FF:000074">
    <property type="entry name" value="Ring finger protein 121"/>
    <property type="match status" value="1"/>
</dbReference>
<dbReference type="Gene3D" id="3.30.40.10">
    <property type="entry name" value="Zinc/RING finger domain, C3HC4 (zinc finger)"/>
    <property type="match status" value="1"/>
</dbReference>
<dbReference type="InterPro" id="IPR040176">
    <property type="entry name" value="RNF121/RNF175"/>
</dbReference>
<dbReference type="InterPro" id="IPR001841">
    <property type="entry name" value="Znf_RING"/>
</dbReference>
<dbReference type="InterPro" id="IPR013083">
    <property type="entry name" value="Znf_RING/FYVE/PHD"/>
</dbReference>
<dbReference type="PANTHER" id="PTHR13407:SF1">
    <property type="entry name" value="E3 UBIQUITIN LIGASE RNF121"/>
    <property type="match status" value="1"/>
</dbReference>
<dbReference type="PANTHER" id="PTHR13407">
    <property type="entry name" value="RNF121 PROTEIN"/>
    <property type="match status" value="1"/>
</dbReference>
<dbReference type="SMART" id="SM00184">
    <property type="entry name" value="RING"/>
    <property type="match status" value="1"/>
</dbReference>
<dbReference type="SUPFAM" id="SSF57850">
    <property type="entry name" value="RING/U-box"/>
    <property type="match status" value="1"/>
</dbReference>
<dbReference type="PROSITE" id="PS50089">
    <property type="entry name" value="ZF_RING_2"/>
    <property type="match status" value="1"/>
</dbReference>
<proteinExistence type="evidence at protein level"/>
<evidence type="ECO:0000250" key="1">
    <source>
        <dbReference type="UniProtKB" id="Q09251"/>
    </source>
</evidence>
<evidence type="ECO:0000255" key="2"/>
<evidence type="ECO:0000255" key="3">
    <source>
        <dbReference type="PROSITE-ProRule" id="PRU00175"/>
    </source>
</evidence>
<evidence type="ECO:0000303" key="4">
    <source>
    </source>
</evidence>
<evidence type="ECO:0000305" key="5"/>
<evidence type="ECO:0007744" key="6">
    <source>
    </source>
</evidence>
<protein>
    <recommendedName>
        <fullName evidence="5">E3 ubiquitin ligase RNF121</fullName>
        <ecNumber evidence="1">2.3.2.27</ecNumber>
    </recommendedName>
    <alternativeName>
        <fullName>RING finger protein 121</fullName>
    </alternativeName>
</protein>
<keyword id="KW-0007">Acetylation</keyword>
<keyword id="KW-0025">Alternative splicing</keyword>
<keyword id="KW-0256">Endoplasmic reticulum</keyword>
<keyword id="KW-0472">Membrane</keyword>
<keyword id="KW-0479">Metal-binding</keyword>
<keyword id="KW-1267">Proteomics identification</keyword>
<keyword id="KW-1185">Reference proteome</keyword>
<keyword id="KW-0808">Transferase</keyword>
<keyword id="KW-0812">Transmembrane</keyword>
<keyword id="KW-1133">Transmembrane helix</keyword>
<keyword id="KW-0862">Zinc</keyword>
<keyword id="KW-0863">Zinc-finger</keyword>
<organism>
    <name type="scientific">Homo sapiens</name>
    <name type="common">Human</name>
    <dbReference type="NCBI Taxonomy" id="9606"/>
    <lineage>
        <taxon>Eukaryota</taxon>
        <taxon>Metazoa</taxon>
        <taxon>Chordata</taxon>
        <taxon>Craniata</taxon>
        <taxon>Vertebrata</taxon>
        <taxon>Euteleostomi</taxon>
        <taxon>Mammalia</taxon>
        <taxon>Eutheria</taxon>
        <taxon>Euarchontoglires</taxon>
        <taxon>Primates</taxon>
        <taxon>Haplorrhini</taxon>
        <taxon>Catarrhini</taxon>
        <taxon>Hominidae</taxon>
        <taxon>Homo</taxon>
    </lineage>
</organism>
<accession>Q9H920</accession>
<accession>B3KSW8</accession>
<accession>Q6IA57</accession>
<accession>Q6P449</accession>
<accession>Q96DB4</accession>
<reference key="1">
    <citation type="journal article" date="2004" name="Nat. Genet.">
        <title>Complete sequencing and characterization of 21,243 full-length human cDNAs.</title>
        <authorList>
            <person name="Ota T."/>
            <person name="Suzuki Y."/>
            <person name="Nishikawa T."/>
            <person name="Otsuki T."/>
            <person name="Sugiyama T."/>
            <person name="Irie R."/>
            <person name="Wakamatsu A."/>
            <person name="Hayashi K."/>
            <person name="Sato H."/>
            <person name="Nagai K."/>
            <person name="Kimura K."/>
            <person name="Makita H."/>
            <person name="Sekine M."/>
            <person name="Obayashi M."/>
            <person name="Nishi T."/>
            <person name="Shibahara T."/>
            <person name="Tanaka T."/>
            <person name="Ishii S."/>
            <person name="Yamamoto J."/>
            <person name="Saito K."/>
            <person name="Kawai Y."/>
            <person name="Isono Y."/>
            <person name="Nakamura Y."/>
            <person name="Nagahari K."/>
            <person name="Murakami K."/>
            <person name="Yasuda T."/>
            <person name="Iwayanagi T."/>
            <person name="Wagatsuma M."/>
            <person name="Shiratori A."/>
            <person name="Sudo H."/>
            <person name="Hosoiri T."/>
            <person name="Kaku Y."/>
            <person name="Kodaira H."/>
            <person name="Kondo H."/>
            <person name="Sugawara M."/>
            <person name="Takahashi M."/>
            <person name="Kanda K."/>
            <person name="Yokoi T."/>
            <person name="Furuya T."/>
            <person name="Kikkawa E."/>
            <person name="Omura Y."/>
            <person name="Abe K."/>
            <person name="Kamihara K."/>
            <person name="Katsuta N."/>
            <person name="Sato K."/>
            <person name="Tanikawa M."/>
            <person name="Yamazaki M."/>
            <person name="Ninomiya K."/>
            <person name="Ishibashi T."/>
            <person name="Yamashita H."/>
            <person name="Murakawa K."/>
            <person name="Fujimori K."/>
            <person name="Tanai H."/>
            <person name="Kimata M."/>
            <person name="Watanabe M."/>
            <person name="Hiraoka S."/>
            <person name="Chiba Y."/>
            <person name="Ishida S."/>
            <person name="Ono Y."/>
            <person name="Takiguchi S."/>
            <person name="Watanabe S."/>
            <person name="Yosida M."/>
            <person name="Hotuta T."/>
            <person name="Kusano J."/>
            <person name="Kanehori K."/>
            <person name="Takahashi-Fujii A."/>
            <person name="Hara H."/>
            <person name="Tanase T.-O."/>
            <person name="Nomura Y."/>
            <person name="Togiya S."/>
            <person name="Komai F."/>
            <person name="Hara R."/>
            <person name="Takeuchi K."/>
            <person name="Arita M."/>
            <person name="Imose N."/>
            <person name="Musashino K."/>
            <person name="Yuuki H."/>
            <person name="Oshima A."/>
            <person name="Sasaki N."/>
            <person name="Aotsuka S."/>
            <person name="Yoshikawa Y."/>
            <person name="Matsunawa H."/>
            <person name="Ichihara T."/>
            <person name="Shiohata N."/>
            <person name="Sano S."/>
            <person name="Moriya S."/>
            <person name="Momiyama H."/>
            <person name="Satoh N."/>
            <person name="Takami S."/>
            <person name="Terashima Y."/>
            <person name="Suzuki O."/>
            <person name="Nakagawa S."/>
            <person name="Senoh A."/>
            <person name="Mizoguchi H."/>
            <person name="Goto Y."/>
            <person name="Shimizu F."/>
            <person name="Wakebe H."/>
            <person name="Hishigaki H."/>
            <person name="Watanabe T."/>
            <person name="Sugiyama A."/>
            <person name="Takemoto M."/>
            <person name="Kawakami B."/>
            <person name="Yamazaki M."/>
            <person name="Watanabe K."/>
            <person name="Kumagai A."/>
            <person name="Itakura S."/>
            <person name="Fukuzumi Y."/>
            <person name="Fujimori Y."/>
            <person name="Komiyama M."/>
            <person name="Tashiro H."/>
            <person name="Tanigami A."/>
            <person name="Fujiwara T."/>
            <person name="Ono T."/>
            <person name="Yamada K."/>
            <person name="Fujii Y."/>
            <person name="Ozaki K."/>
            <person name="Hirao M."/>
            <person name="Ohmori Y."/>
            <person name="Kawabata A."/>
            <person name="Hikiji T."/>
            <person name="Kobatake N."/>
            <person name="Inagaki H."/>
            <person name="Ikema Y."/>
            <person name="Okamoto S."/>
            <person name="Okitani R."/>
            <person name="Kawakami T."/>
            <person name="Noguchi S."/>
            <person name="Itoh T."/>
            <person name="Shigeta K."/>
            <person name="Senba T."/>
            <person name="Matsumura K."/>
            <person name="Nakajima Y."/>
            <person name="Mizuno T."/>
            <person name="Morinaga M."/>
            <person name="Sasaki M."/>
            <person name="Togashi T."/>
            <person name="Oyama M."/>
            <person name="Hata H."/>
            <person name="Watanabe M."/>
            <person name="Komatsu T."/>
            <person name="Mizushima-Sugano J."/>
            <person name="Satoh T."/>
            <person name="Shirai Y."/>
            <person name="Takahashi Y."/>
            <person name="Nakagawa K."/>
            <person name="Okumura K."/>
            <person name="Nagase T."/>
            <person name="Nomura N."/>
            <person name="Kikuchi H."/>
            <person name="Masuho Y."/>
            <person name="Yamashita R."/>
            <person name="Nakai K."/>
            <person name="Yada T."/>
            <person name="Nakamura Y."/>
            <person name="Ohara O."/>
            <person name="Isogai T."/>
            <person name="Sugano S."/>
        </authorList>
    </citation>
    <scope>NUCLEOTIDE SEQUENCE [LARGE SCALE MRNA] (ISOFORMS 1 AND 2)</scope>
    <source>
        <tissue>Brain cortex</tissue>
        <tissue>Teratocarcinoma</tissue>
    </source>
</reference>
<reference key="2">
    <citation type="submission" date="2004-06" db="EMBL/GenBank/DDBJ databases">
        <title>Cloning of human full open reading frames in Gateway(TM) system entry vector (pDONR201).</title>
        <authorList>
            <person name="Ebert L."/>
            <person name="Schick M."/>
            <person name="Neubert P."/>
            <person name="Schatten R."/>
            <person name="Henze S."/>
            <person name="Korn B."/>
        </authorList>
    </citation>
    <scope>NUCLEOTIDE SEQUENCE [LARGE SCALE MRNA] (ISOFORM 1)</scope>
</reference>
<reference key="3">
    <citation type="journal article" date="2006" name="Nature">
        <title>Human chromosome 11 DNA sequence and analysis including novel gene identification.</title>
        <authorList>
            <person name="Taylor T.D."/>
            <person name="Noguchi H."/>
            <person name="Totoki Y."/>
            <person name="Toyoda A."/>
            <person name="Kuroki Y."/>
            <person name="Dewar K."/>
            <person name="Lloyd C."/>
            <person name="Itoh T."/>
            <person name="Takeda T."/>
            <person name="Kim D.-W."/>
            <person name="She X."/>
            <person name="Barlow K.F."/>
            <person name="Bloom T."/>
            <person name="Bruford E."/>
            <person name="Chang J.L."/>
            <person name="Cuomo C.A."/>
            <person name="Eichler E."/>
            <person name="FitzGerald M.G."/>
            <person name="Jaffe D.B."/>
            <person name="LaButti K."/>
            <person name="Nicol R."/>
            <person name="Park H.-S."/>
            <person name="Seaman C."/>
            <person name="Sougnez C."/>
            <person name="Yang X."/>
            <person name="Zimmer A.R."/>
            <person name="Zody M.C."/>
            <person name="Birren B.W."/>
            <person name="Nusbaum C."/>
            <person name="Fujiyama A."/>
            <person name="Hattori M."/>
            <person name="Rogers J."/>
            <person name="Lander E.S."/>
            <person name="Sakaki Y."/>
        </authorList>
    </citation>
    <scope>NUCLEOTIDE SEQUENCE [LARGE SCALE GENOMIC DNA]</scope>
</reference>
<reference key="4">
    <citation type="submission" date="2005-07" db="EMBL/GenBank/DDBJ databases">
        <authorList>
            <person name="Mural R.J."/>
            <person name="Istrail S."/>
            <person name="Sutton G."/>
            <person name="Florea L."/>
            <person name="Halpern A.L."/>
            <person name="Mobarry C.M."/>
            <person name="Lippert R."/>
            <person name="Walenz B."/>
            <person name="Shatkay H."/>
            <person name="Dew I."/>
            <person name="Miller J.R."/>
            <person name="Flanigan M.J."/>
            <person name="Edwards N.J."/>
            <person name="Bolanos R."/>
            <person name="Fasulo D."/>
            <person name="Halldorsson B.V."/>
            <person name="Hannenhalli S."/>
            <person name="Turner R."/>
            <person name="Yooseph S."/>
            <person name="Lu F."/>
            <person name="Nusskern D.R."/>
            <person name="Shue B.C."/>
            <person name="Zheng X.H."/>
            <person name="Zhong F."/>
            <person name="Delcher A.L."/>
            <person name="Huson D.H."/>
            <person name="Kravitz S.A."/>
            <person name="Mouchard L."/>
            <person name="Reinert K."/>
            <person name="Remington K.A."/>
            <person name="Clark A.G."/>
            <person name="Waterman M.S."/>
            <person name="Eichler E.E."/>
            <person name="Adams M.D."/>
            <person name="Hunkapiller M.W."/>
            <person name="Myers E.W."/>
            <person name="Venter J.C."/>
        </authorList>
    </citation>
    <scope>NUCLEOTIDE SEQUENCE [LARGE SCALE GENOMIC DNA]</scope>
</reference>
<reference key="5">
    <citation type="journal article" date="2004" name="Genome Res.">
        <title>The status, quality, and expansion of the NIH full-length cDNA project: the Mammalian Gene Collection (MGC).</title>
        <authorList>
            <consortium name="The MGC Project Team"/>
        </authorList>
    </citation>
    <scope>NUCLEOTIDE SEQUENCE [LARGE SCALE MRNA] OF 2-327 (ISOFORM 1)</scope>
    <source>
        <tissue>Duodenum</tissue>
        <tissue>Pancreas</tissue>
    </source>
</reference>
<reference key="6">
    <citation type="journal article" date="2012" name="Proc. Natl. Acad. Sci. U.S.A.">
        <title>N-terminal acetylome analyses and functional insights of the N-terminal acetyltransferase NatB.</title>
        <authorList>
            <person name="Van Damme P."/>
            <person name="Lasa M."/>
            <person name="Polevoda B."/>
            <person name="Gazquez C."/>
            <person name="Elosegui-Artola A."/>
            <person name="Kim D.S."/>
            <person name="De Juan-Pardo E."/>
            <person name="Demeyer K."/>
            <person name="Hole K."/>
            <person name="Larrea E."/>
            <person name="Timmerman E."/>
            <person name="Prieto J."/>
            <person name="Arnesen T."/>
            <person name="Sherman F."/>
            <person name="Gevaert K."/>
            <person name="Aldabe R."/>
        </authorList>
    </citation>
    <scope>ACETYLATION [LARGE SCALE ANALYSIS] AT ALA-2</scope>
    <scope>CLEAVAGE OF INITIATOR METHIONINE [LARGE SCALE ANALYSIS]</scope>
    <scope>IDENTIFICATION BY MASS SPECTROMETRY [LARGE SCALE ANALYSIS]</scope>
</reference>
<reference key="7">
    <citation type="journal article" date="2014" name="J. Proteomics">
        <title>An enzyme assisted RP-RPLC approach for in-depth analysis of human liver phosphoproteome.</title>
        <authorList>
            <person name="Bian Y."/>
            <person name="Song C."/>
            <person name="Cheng K."/>
            <person name="Dong M."/>
            <person name="Wang F."/>
            <person name="Huang J."/>
            <person name="Sun D."/>
            <person name="Wang L."/>
            <person name="Ye M."/>
            <person name="Zou H."/>
        </authorList>
    </citation>
    <scope>IDENTIFICATION BY MASS SPECTROMETRY [LARGE SCALE ANALYSIS]</scope>
    <source>
        <tissue>Liver</tissue>
    </source>
</reference>
<gene>
    <name type="primary">RNF121</name>
</gene>
<sequence length="327" mass="37882">MAAVVEVEVGGGAAGERELDEVDMSDLSPEEQWRVEHARMHAKHRGHEAMHAEMVLILIATLVVAQLLLVQWKQRHPRSYNMVTLFQMWVVPLYFTVKLHWWRFLVIWILFSAVTAFVTFRATRKPLVQTTPRLVYKWFLLIYKISYATGIVGYMAVMFTLFGLNLLFKIKPEDAMDFGISLLFYGLYYGVLERDFAEMCADYMASTIGFYSESGMPTKHLSDSVCAVCGQQIFVDVSEEGIIENTYRLSCNHVFHEFCIRGWCIVGKKQTCPYCKEKVDLKRMFSNPWERPHVMYGQLLDWLRYLVAWQPVIIGVVQGINYILGLE</sequence>
<feature type="initiator methionine" description="Removed" evidence="6">
    <location>
        <position position="1"/>
    </location>
</feature>
<feature type="chain" id="PRO_0000261407" description="E3 ubiquitin ligase RNF121">
    <location>
        <begin position="2"/>
        <end position="327"/>
    </location>
</feature>
<feature type="transmembrane region" description="Helical" evidence="2">
    <location>
        <begin position="50"/>
        <end position="70"/>
    </location>
</feature>
<feature type="transmembrane region" description="Helical" evidence="2">
    <location>
        <begin position="79"/>
        <end position="99"/>
    </location>
</feature>
<feature type="transmembrane region" description="Helical" evidence="2">
    <location>
        <begin position="100"/>
        <end position="120"/>
    </location>
</feature>
<feature type="transmembrane region" description="Helical" evidence="2">
    <location>
        <begin position="148"/>
        <end position="168"/>
    </location>
</feature>
<feature type="transmembrane region" description="Helical" evidence="2">
    <location>
        <begin position="172"/>
        <end position="192"/>
    </location>
</feature>
<feature type="transmembrane region" description="Helical" evidence="2">
    <location>
        <begin position="306"/>
        <end position="326"/>
    </location>
</feature>
<feature type="zinc finger region" description="RING-type; atypical" evidence="3">
    <location>
        <begin position="226"/>
        <end position="276"/>
    </location>
</feature>
<feature type="modified residue" description="N-acetylalanine" evidence="6">
    <location>
        <position position="2"/>
    </location>
</feature>
<feature type="splice variant" id="VSP_054133" description="In isoform 2." evidence="4">
    <location>
        <begin position="1"/>
        <end position="81"/>
    </location>
</feature>
<feature type="sequence conflict" description="In Ref. 2; CAG33579." evidence="5" ref="2">
    <original>E</original>
    <variation>D</variation>
    <location>
        <position position="327"/>
    </location>
</feature>
<name>RN121_HUMAN</name>